<reference key="1">
    <citation type="submission" date="2006-04" db="EMBL/GenBank/DDBJ databases">
        <title>Complete sequence of chromosome of Deinococcus geothermalis DSM 11300.</title>
        <authorList>
            <person name="Copeland A."/>
            <person name="Lucas S."/>
            <person name="Lapidus A."/>
            <person name="Barry K."/>
            <person name="Detter J.C."/>
            <person name="Glavina del Rio T."/>
            <person name="Hammon N."/>
            <person name="Israni S."/>
            <person name="Dalin E."/>
            <person name="Tice H."/>
            <person name="Pitluck S."/>
            <person name="Brettin T."/>
            <person name="Bruce D."/>
            <person name="Han C."/>
            <person name="Tapia R."/>
            <person name="Saunders E."/>
            <person name="Gilna P."/>
            <person name="Schmutz J."/>
            <person name="Larimer F."/>
            <person name="Land M."/>
            <person name="Hauser L."/>
            <person name="Kyrpides N."/>
            <person name="Kim E."/>
            <person name="Daly M.J."/>
            <person name="Fredrickson J.K."/>
            <person name="Makarova K.S."/>
            <person name="Gaidamakova E.K."/>
            <person name="Zhai M."/>
            <person name="Richardson P."/>
        </authorList>
    </citation>
    <scope>NUCLEOTIDE SEQUENCE [LARGE SCALE GENOMIC DNA]</scope>
    <source>
        <strain>DSM 11300 / CIP 105573 / AG-3a</strain>
    </source>
</reference>
<protein>
    <recommendedName>
        <fullName evidence="1">Nucleoside diphosphate kinase</fullName>
        <shortName evidence="1">NDK</shortName>
        <shortName evidence="1">NDP kinase</shortName>
        <ecNumber evidence="1">2.7.4.6</ecNumber>
    </recommendedName>
    <alternativeName>
        <fullName evidence="1">Nucleoside-2-P kinase</fullName>
    </alternativeName>
</protein>
<accession>Q1IXQ0</accession>
<dbReference type="EC" id="2.7.4.6" evidence="1"/>
<dbReference type="EMBL" id="CP000359">
    <property type="protein sequence ID" value="ABF45984.1"/>
    <property type="status" value="ALT_INIT"/>
    <property type="molecule type" value="Genomic_DNA"/>
</dbReference>
<dbReference type="RefSeq" id="WP_041221275.1">
    <property type="nucleotide sequence ID" value="NC_008025.1"/>
</dbReference>
<dbReference type="SMR" id="Q1IXQ0"/>
<dbReference type="STRING" id="319795.Dgeo_1689"/>
<dbReference type="KEGG" id="dge:Dgeo_1689"/>
<dbReference type="eggNOG" id="COG0105">
    <property type="taxonomic scope" value="Bacteria"/>
</dbReference>
<dbReference type="HOGENOM" id="CLU_060216_6_3_0"/>
<dbReference type="Proteomes" id="UP000002431">
    <property type="component" value="Chromosome"/>
</dbReference>
<dbReference type="GO" id="GO:0005737">
    <property type="term" value="C:cytoplasm"/>
    <property type="evidence" value="ECO:0007669"/>
    <property type="project" value="UniProtKB-SubCell"/>
</dbReference>
<dbReference type="GO" id="GO:0005524">
    <property type="term" value="F:ATP binding"/>
    <property type="evidence" value="ECO:0007669"/>
    <property type="project" value="UniProtKB-UniRule"/>
</dbReference>
<dbReference type="GO" id="GO:0046872">
    <property type="term" value="F:metal ion binding"/>
    <property type="evidence" value="ECO:0007669"/>
    <property type="project" value="UniProtKB-KW"/>
</dbReference>
<dbReference type="GO" id="GO:0004550">
    <property type="term" value="F:nucleoside diphosphate kinase activity"/>
    <property type="evidence" value="ECO:0007669"/>
    <property type="project" value="UniProtKB-UniRule"/>
</dbReference>
<dbReference type="GO" id="GO:0006241">
    <property type="term" value="P:CTP biosynthetic process"/>
    <property type="evidence" value="ECO:0007669"/>
    <property type="project" value="UniProtKB-UniRule"/>
</dbReference>
<dbReference type="GO" id="GO:0006183">
    <property type="term" value="P:GTP biosynthetic process"/>
    <property type="evidence" value="ECO:0007669"/>
    <property type="project" value="UniProtKB-UniRule"/>
</dbReference>
<dbReference type="GO" id="GO:0006228">
    <property type="term" value="P:UTP biosynthetic process"/>
    <property type="evidence" value="ECO:0007669"/>
    <property type="project" value="UniProtKB-UniRule"/>
</dbReference>
<dbReference type="CDD" id="cd04413">
    <property type="entry name" value="NDPk_I"/>
    <property type="match status" value="1"/>
</dbReference>
<dbReference type="FunFam" id="3.30.70.141:FF:000003">
    <property type="entry name" value="Nucleoside diphosphate kinase"/>
    <property type="match status" value="1"/>
</dbReference>
<dbReference type="Gene3D" id="3.30.70.141">
    <property type="entry name" value="Nucleoside diphosphate kinase-like domain"/>
    <property type="match status" value="1"/>
</dbReference>
<dbReference type="HAMAP" id="MF_00451">
    <property type="entry name" value="NDP_kinase"/>
    <property type="match status" value="1"/>
</dbReference>
<dbReference type="InterPro" id="IPR034907">
    <property type="entry name" value="NDK-like_dom"/>
</dbReference>
<dbReference type="InterPro" id="IPR036850">
    <property type="entry name" value="NDK-like_dom_sf"/>
</dbReference>
<dbReference type="InterPro" id="IPR001564">
    <property type="entry name" value="Nucleoside_diP_kinase"/>
</dbReference>
<dbReference type="InterPro" id="IPR023005">
    <property type="entry name" value="Nucleoside_diP_kinase_AS"/>
</dbReference>
<dbReference type="NCBIfam" id="NF001908">
    <property type="entry name" value="PRK00668.1"/>
    <property type="match status" value="1"/>
</dbReference>
<dbReference type="PANTHER" id="PTHR11349">
    <property type="entry name" value="NUCLEOSIDE DIPHOSPHATE KINASE"/>
    <property type="match status" value="1"/>
</dbReference>
<dbReference type="Pfam" id="PF00334">
    <property type="entry name" value="NDK"/>
    <property type="match status" value="1"/>
</dbReference>
<dbReference type="PRINTS" id="PR01243">
    <property type="entry name" value="NUCDPKINASE"/>
</dbReference>
<dbReference type="SMART" id="SM00562">
    <property type="entry name" value="NDK"/>
    <property type="match status" value="1"/>
</dbReference>
<dbReference type="SUPFAM" id="SSF54919">
    <property type="entry name" value="Nucleoside diphosphate kinase, NDK"/>
    <property type="match status" value="1"/>
</dbReference>
<dbReference type="PROSITE" id="PS00469">
    <property type="entry name" value="NDPK"/>
    <property type="match status" value="1"/>
</dbReference>
<dbReference type="PROSITE" id="PS51374">
    <property type="entry name" value="NDPK_LIKE"/>
    <property type="match status" value="1"/>
</dbReference>
<evidence type="ECO:0000255" key="1">
    <source>
        <dbReference type="HAMAP-Rule" id="MF_00451"/>
    </source>
</evidence>
<evidence type="ECO:0000305" key="2"/>
<feature type="chain" id="PRO_0000267775" description="Nucleoside diphosphate kinase">
    <location>
        <begin position="1"/>
        <end position="138"/>
    </location>
</feature>
<feature type="active site" description="Pros-phosphohistidine intermediate" evidence="1">
    <location>
        <position position="115"/>
    </location>
</feature>
<feature type="binding site" evidence="1">
    <location>
        <position position="9"/>
    </location>
    <ligand>
        <name>ATP</name>
        <dbReference type="ChEBI" id="CHEBI:30616"/>
    </ligand>
</feature>
<feature type="binding site" evidence="1">
    <location>
        <position position="57"/>
    </location>
    <ligand>
        <name>ATP</name>
        <dbReference type="ChEBI" id="CHEBI:30616"/>
    </ligand>
</feature>
<feature type="binding site" evidence="1">
    <location>
        <position position="85"/>
    </location>
    <ligand>
        <name>ATP</name>
        <dbReference type="ChEBI" id="CHEBI:30616"/>
    </ligand>
</feature>
<feature type="binding site" evidence="1">
    <location>
        <position position="91"/>
    </location>
    <ligand>
        <name>ATP</name>
        <dbReference type="ChEBI" id="CHEBI:30616"/>
    </ligand>
</feature>
<feature type="binding site" evidence="1">
    <location>
        <position position="102"/>
    </location>
    <ligand>
        <name>ATP</name>
        <dbReference type="ChEBI" id="CHEBI:30616"/>
    </ligand>
</feature>
<feature type="binding site" evidence="1">
    <location>
        <position position="112"/>
    </location>
    <ligand>
        <name>ATP</name>
        <dbReference type="ChEBI" id="CHEBI:30616"/>
    </ligand>
</feature>
<comment type="function">
    <text evidence="1">Major role in the synthesis of nucleoside triphosphates other than ATP. The ATP gamma phosphate is transferred to the NDP beta phosphate via a ping-pong mechanism, using a phosphorylated active-site intermediate.</text>
</comment>
<comment type="catalytic activity">
    <reaction evidence="1">
        <text>a 2'-deoxyribonucleoside 5'-diphosphate + ATP = a 2'-deoxyribonucleoside 5'-triphosphate + ADP</text>
        <dbReference type="Rhea" id="RHEA:44640"/>
        <dbReference type="ChEBI" id="CHEBI:30616"/>
        <dbReference type="ChEBI" id="CHEBI:61560"/>
        <dbReference type="ChEBI" id="CHEBI:73316"/>
        <dbReference type="ChEBI" id="CHEBI:456216"/>
        <dbReference type="EC" id="2.7.4.6"/>
    </reaction>
</comment>
<comment type="catalytic activity">
    <reaction evidence="1">
        <text>a ribonucleoside 5'-diphosphate + ATP = a ribonucleoside 5'-triphosphate + ADP</text>
        <dbReference type="Rhea" id="RHEA:18113"/>
        <dbReference type="ChEBI" id="CHEBI:30616"/>
        <dbReference type="ChEBI" id="CHEBI:57930"/>
        <dbReference type="ChEBI" id="CHEBI:61557"/>
        <dbReference type="ChEBI" id="CHEBI:456216"/>
        <dbReference type="EC" id="2.7.4.6"/>
    </reaction>
</comment>
<comment type="cofactor">
    <cofactor evidence="1">
        <name>Mg(2+)</name>
        <dbReference type="ChEBI" id="CHEBI:18420"/>
    </cofactor>
</comment>
<comment type="subunit">
    <text evidence="1">Homotetramer.</text>
</comment>
<comment type="subcellular location">
    <subcellularLocation>
        <location evidence="1">Cytoplasm</location>
    </subcellularLocation>
</comment>
<comment type="similarity">
    <text evidence="1">Belongs to the NDK family.</text>
</comment>
<comment type="sequence caution" evidence="2">
    <conflict type="erroneous initiation">
        <sequence resource="EMBL-CDS" id="ABF45984"/>
    </conflict>
</comment>
<organism>
    <name type="scientific">Deinococcus geothermalis (strain DSM 11300 / CIP 105573 / AG-3a)</name>
    <dbReference type="NCBI Taxonomy" id="319795"/>
    <lineage>
        <taxon>Bacteria</taxon>
        <taxon>Thermotogati</taxon>
        <taxon>Deinococcota</taxon>
        <taxon>Deinococci</taxon>
        <taxon>Deinococcales</taxon>
        <taxon>Deinococcaceae</taxon>
        <taxon>Deinococcus</taxon>
    </lineage>
</organism>
<keyword id="KW-0067">ATP-binding</keyword>
<keyword id="KW-0963">Cytoplasm</keyword>
<keyword id="KW-0418">Kinase</keyword>
<keyword id="KW-0460">Magnesium</keyword>
<keyword id="KW-0479">Metal-binding</keyword>
<keyword id="KW-0546">Nucleotide metabolism</keyword>
<keyword id="KW-0547">Nucleotide-binding</keyword>
<keyword id="KW-0597">Phosphoprotein</keyword>
<keyword id="KW-0808">Transferase</keyword>
<name>NDK_DEIGD</name>
<proteinExistence type="inferred from homology"/>
<sequence length="138" mass="15244">MERTFAMIKPDGVRRGLTPEILARIQKKGYRVVGLKQMLISRELAERHYAEHRERPFFGELVDFITSGPVVAIALEGENAIAGWRAMMGATNPANAAPGTIRADFATTTGENVTHGSDSPESAARELSLFFREDELLK</sequence>
<gene>
    <name evidence="1" type="primary">ndk</name>
    <name type="ordered locus">Dgeo_1689</name>
</gene>